<organism>
    <name type="scientific">Staphylococcus aureus (strain Mu3 / ATCC 700698)</name>
    <dbReference type="NCBI Taxonomy" id="418127"/>
    <lineage>
        <taxon>Bacteria</taxon>
        <taxon>Bacillati</taxon>
        <taxon>Bacillota</taxon>
        <taxon>Bacilli</taxon>
        <taxon>Bacillales</taxon>
        <taxon>Staphylococcaceae</taxon>
        <taxon>Staphylococcus</taxon>
    </lineage>
</organism>
<dbReference type="EC" id="1.1.99.1" evidence="1"/>
<dbReference type="EC" id="1.2.1.8" evidence="1"/>
<dbReference type="EMBL" id="AP009324">
    <property type="protein sequence ID" value="BAF79479.1"/>
    <property type="molecule type" value="Genomic_DNA"/>
</dbReference>
<dbReference type="RefSeq" id="WP_000066521.1">
    <property type="nucleotide sequence ID" value="NZ_CTYB01000012.1"/>
</dbReference>
<dbReference type="SMR" id="A7X6Z3"/>
<dbReference type="CAZy" id="AA3">
    <property type="family name" value="Auxiliary Activities 3"/>
</dbReference>
<dbReference type="KEGG" id="saw:SAHV_2596"/>
<dbReference type="HOGENOM" id="CLU_002865_7_1_9"/>
<dbReference type="UniPathway" id="UPA00529">
    <property type="reaction ID" value="UER00385"/>
</dbReference>
<dbReference type="GO" id="GO:0016020">
    <property type="term" value="C:membrane"/>
    <property type="evidence" value="ECO:0007669"/>
    <property type="project" value="TreeGrafter"/>
</dbReference>
<dbReference type="GO" id="GO:0008802">
    <property type="term" value="F:betaine-aldehyde dehydrogenase (NAD+) activity"/>
    <property type="evidence" value="ECO:0007669"/>
    <property type="project" value="UniProtKB-EC"/>
</dbReference>
<dbReference type="GO" id="GO:0008812">
    <property type="term" value="F:choline dehydrogenase activity"/>
    <property type="evidence" value="ECO:0007669"/>
    <property type="project" value="UniProtKB-UniRule"/>
</dbReference>
<dbReference type="GO" id="GO:0050660">
    <property type="term" value="F:flavin adenine dinucleotide binding"/>
    <property type="evidence" value="ECO:0007669"/>
    <property type="project" value="InterPro"/>
</dbReference>
<dbReference type="GO" id="GO:0019285">
    <property type="term" value="P:glycine betaine biosynthetic process from choline"/>
    <property type="evidence" value="ECO:0007669"/>
    <property type="project" value="UniProtKB-UniRule"/>
</dbReference>
<dbReference type="Gene3D" id="3.50.50.60">
    <property type="entry name" value="FAD/NAD(P)-binding domain"/>
    <property type="match status" value="1"/>
</dbReference>
<dbReference type="Gene3D" id="3.30.560.10">
    <property type="entry name" value="Glucose Oxidase, domain 3"/>
    <property type="match status" value="1"/>
</dbReference>
<dbReference type="HAMAP" id="MF_00750">
    <property type="entry name" value="Choline_dehydrogen"/>
    <property type="match status" value="1"/>
</dbReference>
<dbReference type="InterPro" id="IPR011533">
    <property type="entry name" value="BetA"/>
</dbReference>
<dbReference type="InterPro" id="IPR036188">
    <property type="entry name" value="FAD/NAD-bd_sf"/>
</dbReference>
<dbReference type="InterPro" id="IPR012132">
    <property type="entry name" value="GMC_OxRdtase"/>
</dbReference>
<dbReference type="InterPro" id="IPR000172">
    <property type="entry name" value="GMC_OxRdtase_N"/>
</dbReference>
<dbReference type="InterPro" id="IPR007867">
    <property type="entry name" value="GMC_OxRtase_C"/>
</dbReference>
<dbReference type="NCBIfam" id="TIGR01810">
    <property type="entry name" value="betA"/>
    <property type="match status" value="1"/>
</dbReference>
<dbReference type="NCBIfam" id="NF002550">
    <property type="entry name" value="PRK02106.1"/>
    <property type="match status" value="1"/>
</dbReference>
<dbReference type="PANTHER" id="PTHR11552:SF147">
    <property type="entry name" value="CHOLINE DEHYDROGENASE, MITOCHONDRIAL"/>
    <property type="match status" value="1"/>
</dbReference>
<dbReference type="PANTHER" id="PTHR11552">
    <property type="entry name" value="GLUCOSE-METHANOL-CHOLINE GMC OXIDOREDUCTASE"/>
    <property type="match status" value="1"/>
</dbReference>
<dbReference type="Pfam" id="PF05199">
    <property type="entry name" value="GMC_oxred_C"/>
    <property type="match status" value="1"/>
</dbReference>
<dbReference type="Pfam" id="PF00732">
    <property type="entry name" value="GMC_oxred_N"/>
    <property type="match status" value="1"/>
</dbReference>
<dbReference type="PIRSF" id="PIRSF000137">
    <property type="entry name" value="Alcohol_oxidase"/>
    <property type="match status" value="1"/>
</dbReference>
<dbReference type="SUPFAM" id="SSF54373">
    <property type="entry name" value="FAD-linked reductases, C-terminal domain"/>
    <property type="match status" value="1"/>
</dbReference>
<dbReference type="SUPFAM" id="SSF51905">
    <property type="entry name" value="FAD/NAD(P)-binding domain"/>
    <property type="match status" value="1"/>
</dbReference>
<dbReference type="PROSITE" id="PS00623">
    <property type="entry name" value="GMC_OXRED_1"/>
    <property type="match status" value="1"/>
</dbReference>
<dbReference type="PROSITE" id="PS00624">
    <property type="entry name" value="GMC_OXRED_2"/>
    <property type="match status" value="1"/>
</dbReference>
<accession>A7X6Z3</accession>
<feature type="chain" id="PRO_1000046573" description="Oxygen-dependent choline dehydrogenase">
    <location>
        <begin position="1"/>
        <end position="569"/>
    </location>
</feature>
<feature type="active site" description="Proton acceptor" evidence="1">
    <location>
        <position position="475"/>
    </location>
</feature>
<feature type="binding site" evidence="1">
    <location>
        <begin position="9"/>
        <end position="38"/>
    </location>
    <ligand>
        <name>FAD</name>
        <dbReference type="ChEBI" id="CHEBI:57692"/>
    </ligand>
</feature>
<reference key="1">
    <citation type="journal article" date="2008" name="Antimicrob. Agents Chemother.">
        <title>Mutated response regulator graR is responsible for phenotypic conversion of Staphylococcus aureus from heterogeneous vancomycin-intermediate resistance to vancomycin-intermediate resistance.</title>
        <authorList>
            <person name="Neoh H.-M."/>
            <person name="Cui L."/>
            <person name="Yuzawa H."/>
            <person name="Takeuchi F."/>
            <person name="Matsuo M."/>
            <person name="Hiramatsu K."/>
        </authorList>
    </citation>
    <scope>NUCLEOTIDE SEQUENCE [LARGE SCALE GENOMIC DNA]</scope>
    <source>
        <strain>Mu3 / ATCC 700698</strain>
    </source>
</reference>
<protein>
    <recommendedName>
        <fullName evidence="1">Oxygen-dependent choline dehydrogenase</fullName>
        <shortName evidence="1">CDH</shortName>
        <shortName evidence="1">CHD</shortName>
        <ecNumber evidence="1">1.1.99.1</ecNumber>
    </recommendedName>
    <alternativeName>
        <fullName evidence="1">Betaine aldehyde dehydrogenase</fullName>
        <shortName evidence="1">BADH</shortName>
        <ecNumber evidence="1">1.2.1.8</ecNumber>
    </alternativeName>
</protein>
<proteinExistence type="inferred from homology"/>
<name>BETA_STAA1</name>
<sequence>MSNKNKSYDYVIIGGGSAGSVLGNRLSEDKDKEVLVLEAGRSDYFWDLFIQMPAALMFPSGNKFYDWIYSTDEEPHMGGRKVAHARGKVLGGSSSINGMIYQRGNPMDYEGWAEPEGMETWDFAHCLPYFKKLEKTYGAAPYDKFRGHDGPIKLKRGPATNPLFQSFFDAGVEAGYHKTPDVNGFRQEGFGPFDSQVHRGRRMSASRAYLHPAMKRKNLTVETRAFVTEIHYEGRRATGVTYKKNGKLHTIDANEVILSGGAFNTPQLLQLSGIGDSEFLKSKGIEPRVHLPGVGENFEDHLEVYIQHKCKEPVSLQPSLDIKRMPFIGLQWIFTRTGAAASNHFEGGGFVRSNNEVDYPNLMFHFLPIAVRYDGQKAAVAHGYQVHVGPMYSNSRGSLKIKSKDPFEKPSIRFNYLSTEEDKKEWVEAIRVARNILSQKAMDPFNGGEISPGPEVQTDEEILDWVRRDGETALHPSCSAKMGPASDPMAVVDPLTMKVHGMENLRVVDASAMPRTTNGNIHAPVLMLAEKAADIIRGRKPLEPQYIDYYKHGVHDENEGAIEVKPYAK</sequence>
<keyword id="KW-0274">FAD</keyword>
<keyword id="KW-0285">Flavoprotein</keyword>
<keyword id="KW-0520">NAD</keyword>
<keyword id="KW-0560">Oxidoreductase</keyword>
<comment type="function">
    <text evidence="1">Involved in the biosynthesis of the osmoprotectant glycine betaine. Catalyzes the oxidation of choline to betaine aldehyde and betaine aldehyde to glycine betaine at the same rate.</text>
</comment>
<comment type="catalytic activity">
    <reaction evidence="1">
        <text>choline + A = betaine aldehyde + AH2</text>
        <dbReference type="Rhea" id="RHEA:17433"/>
        <dbReference type="ChEBI" id="CHEBI:13193"/>
        <dbReference type="ChEBI" id="CHEBI:15354"/>
        <dbReference type="ChEBI" id="CHEBI:15710"/>
        <dbReference type="ChEBI" id="CHEBI:17499"/>
        <dbReference type="EC" id="1.1.99.1"/>
    </reaction>
</comment>
<comment type="catalytic activity">
    <reaction evidence="1">
        <text>betaine aldehyde + NAD(+) + H2O = glycine betaine + NADH + 2 H(+)</text>
        <dbReference type="Rhea" id="RHEA:15305"/>
        <dbReference type="ChEBI" id="CHEBI:15377"/>
        <dbReference type="ChEBI" id="CHEBI:15378"/>
        <dbReference type="ChEBI" id="CHEBI:15710"/>
        <dbReference type="ChEBI" id="CHEBI:17750"/>
        <dbReference type="ChEBI" id="CHEBI:57540"/>
        <dbReference type="ChEBI" id="CHEBI:57945"/>
        <dbReference type="EC" id="1.2.1.8"/>
    </reaction>
</comment>
<comment type="cofactor">
    <cofactor evidence="1">
        <name>FAD</name>
        <dbReference type="ChEBI" id="CHEBI:57692"/>
    </cofactor>
</comment>
<comment type="pathway">
    <text evidence="1">Amine and polyamine biosynthesis; betaine biosynthesis via choline pathway; betaine aldehyde from choline (cytochrome c reductase route): step 1/1.</text>
</comment>
<comment type="similarity">
    <text evidence="1">Belongs to the GMC oxidoreductase family.</text>
</comment>
<gene>
    <name evidence="1" type="primary">betA</name>
    <name type="ordered locus">SAHV_2596</name>
</gene>
<evidence type="ECO:0000255" key="1">
    <source>
        <dbReference type="HAMAP-Rule" id="MF_00750"/>
    </source>
</evidence>